<dbReference type="PIR" id="A90649">
    <property type="entry name" value="WIWTA5"/>
</dbReference>
<dbReference type="SMR" id="P01084"/>
<dbReference type="STRING" id="4565.P01084"/>
<dbReference type="Allergome" id="8186">
    <property type="allergen name" value="Tri a 28"/>
</dbReference>
<dbReference type="Proteomes" id="UP000019116">
    <property type="component" value="Unplaced"/>
</dbReference>
<dbReference type="ExpressionAtlas" id="P01084">
    <property type="expression patterns" value="baseline"/>
</dbReference>
<dbReference type="GO" id="GO:0005576">
    <property type="term" value="C:extracellular region"/>
    <property type="evidence" value="ECO:0007669"/>
    <property type="project" value="UniProtKB-SubCell"/>
</dbReference>
<dbReference type="GO" id="GO:0015066">
    <property type="term" value="F:alpha-amylase inhibitor activity"/>
    <property type="evidence" value="ECO:0007669"/>
    <property type="project" value="UniProtKB-KW"/>
</dbReference>
<dbReference type="GO" id="GO:0004867">
    <property type="term" value="F:serine-type endopeptidase inhibitor activity"/>
    <property type="evidence" value="ECO:0007669"/>
    <property type="project" value="InterPro"/>
</dbReference>
<dbReference type="CDD" id="cd00261">
    <property type="entry name" value="AAI_SS"/>
    <property type="match status" value="1"/>
</dbReference>
<dbReference type="Gene3D" id="1.10.110.10">
    <property type="entry name" value="Plant lipid-transfer and hydrophobic proteins"/>
    <property type="match status" value="1"/>
</dbReference>
<dbReference type="InterPro" id="IPR006106">
    <property type="entry name" value="Allergen/soft/tryp_amyl_inhib"/>
</dbReference>
<dbReference type="InterPro" id="IPR006105">
    <property type="entry name" value="Allergen/tryp_amyl_inhib_CS"/>
</dbReference>
<dbReference type="InterPro" id="IPR036312">
    <property type="entry name" value="Bifun_inhib/LTP/seed_sf"/>
</dbReference>
<dbReference type="InterPro" id="IPR016140">
    <property type="entry name" value="Bifunc_inhib/LTP/seed_store"/>
</dbReference>
<dbReference type="PANTHER" id="PTHR34481:SF8">
    <property type="entry name" value="SEED ALLERGENIC PROTEIN RAG1"/>
    <property type="match status" value="1"/>
</dbReference>
<dbReference type="PANTHER" id="PTHR34481">
    <property type="entry name" value="TRYPSIN/FACTOR XIIA INHIBITOR-RELATED"/>
    <property type="match status" value="1"/>
</dbReference>
<dbReference type="Pfam" id="PF00234">
    <property type="entry name" value="Tryp_alpha_amyl"/>
    <property type="match status" value="1"/>
</dbReference>
<dbReference type="PIRSF" id="PIRSF001657">
    <property type="entry name" value="Allergen/amylase_inhib"/>
    <property type="match status" value="1"/>
</dbReference>
<dbReference type="PRINTS" id="PR00808">
    <property type="entry name" value="AMLASEINHBTR"/>
</dbReference>
<dbReference type="SUPFAM" id="SSF47699">
    <property type="entry name" value="Bifunctional inhibitor/lipid-transfer protein/seed storage 2S albumin"/>
    <property type="match status" value="1"/>
</dbReference>
<dbReference type="PROSITE" id="PS00426">
    <property type="entry name" value="CEREAL_TRYP_AMYL_INH"/>
    <property type="match status" value="1"/>
</dbReference>
<reference key="1">
    <citation type="journal article" date="1983" name="Biochim. Biophys. Acta">
        <title>Complete amino acid sequence of an alpha-amylase inhibitor in wheat kernel.</title>
        <authorList>
            <person name="Maeda K."/>
            <person name="Hase T."/>
            <person name="Matsubara H."/>
        </authorList>
    </citation>
    <scope>PROTEIN SEQUENCE</scope>
</reference>
<reference key="2">
    <citation type="journal article" date="1985" name="Biochim. Biophys. Acta">
        <title>Complete amino acid sequence of an alpha-amylase inhibitor in wheat kernel (0.19-inhibitor).</title>
        <authorList>
            <person name="Maeda K."/>
            <person name="Wakabayashi S."/>
            <person name="Matsubara H."/>
        </authorList>
    </citation>
    <scope>SEQUENCE REVISION TO 119-124</scope>
</reference>
<reference key="3">
    <citation type="journal article" date="1983" name="J. Biochem.">
        <title>Disulfide bridges in an alpha-amylase inhibitor from wheat kernel.</title>
        <authorList>
            <person name="Maeda K."/>
            <person name="Wakabayashi S."/>
            <person name="Matsubara H."/>
        </authorList>
    </citation>
    <scope>DISULFIDE BONDS</scope>
</reference>
<keyword id="KW-0022">Alpha-amylase inhibitor</keyword>
<keyword id="KW-0903">Direct protein sequencing</keyword>
<keyword id="KW-1015">Disulfide bond</keyword>
<keyword id="KW-1185">Reference proteome</keyword>
<keyword id="KW-0964">Secreted</keyword>
<sequence length="124" mass="13185">SGPWMCYPGQAFQVPALPGCRPLLKLQCNGSQVPEAVLRDCCQQLADISEWPRCGALYSMLDSMYKEHGVSEGQAGTGAFPSCRREVVKLTAASITAVCRLPIVVDASGDGAYVCKDVAAYPDA</sequence>
<name>IAA5_WHEAT</name>
<comment type="function">
    <text>Alpha-amylase inhibitor.</text>
</comment>
<comment type="subunit">
    <text>Homodimer.</text>
</comment>
<comment type="subcellular location">
    <subcellularLocation>
        <location>Secreted</location>
    </subcellularLocation>
</comment>
<comment type="tissue specificity">
    <text>Endosperm.</text>
</comment>
<comment type="PTM">
    <text>The disulfide bonds are essential for the inhibitor activity.</text>
</comment>
<comment type="similarity">
    <text evidence="2">Belongs to the protease inhibitor I6 (cereal trypsin/alpha-amylase inhibitor) family.</text>
</comment>
<accession>P01084</accession>
<proteinExistence type="evidence at protein level"/>
<organism>
    <name type="scientific">Triticum aestivum</name>
    <name type="common">Wheat</name>
    <dbReference type="NCBI Taxonomy" id="4565"/>
    <lineage>
        <taxon>Eukaryota</taxon>
        <taxon>Viridiplantae</taxon>
        <taxon>Streptophyta</taxon>
        <taxon>Embryophyta</taxon>
        <taxon>Tracheophyta</taxon>
        <taxon>Spermatophyta</taxon>
        <taxon>Magnoliopsida</taxon>
        <taxon>Liliopsida</taxon>
        <taxon>Poales</taxon>
        <taxon>Poaceae</taxon>
        <taxon>BOP clade</taxon>
        <taxon>Pooideae</taxon>
        <taxon>Triticodae</taxon>
        <taxon>Triticeae</taxon>
        <taxon>Triticinae</taxon>
        <taxon>Triticum</taxon>
    </lineage>
</organism>
<protein>
    <recommendedName>
        <fullName>Alpha-amylase inhibitor 0.53</fullName>
    </recommendedName>
</protein>
<feature type="chain" id="PRO_0000070486" description="Alpha-amylase inhibitor 0.53">
    <location>
        <begin position="1"/>
        <end position="124"/>
    </location>
</feature>
<feature type="disulfide bond" evidence="3">
    <location>
        <begin position="20"/>
        <end position="41"/>
    </location>
</feature>
<feature type="disulfide bond" evidence="1">
    <location>
        <begin position="28"/>
        <end position="83"/>
    </location>
</feature>
<feature type="disulfide bond" evidence="3">
    <location>
        <begin position="42"/>
        <end position="99"/>
    </location>
</feature>
<feature type="disulfide bond" evidence="3">
    <location>
        <begin position="54"/>
        <end position="115"/>
    </location>
</feature>
<evidence type="ECO:0000269" key="1">
    <source>
    </source>
</evidence>
<evidence type="ECO:0000305" key="2"/>
<evidence type="ECO:0000305" key="3">
    <source>
    </source>
</evidence>